<keyword id="KW-0249">Electron transport</keyword>
<keyword id="KW-0472">Membrane</keyword>
<keyword id="KW-0496">Mitochondrion</keyword>
<keyword id="KW-0999">Mitochondrion inner membrane</keyword>
<keyword id="KW-0520">NAD</keyword>
<keyword id="KW-0679">Respiratory chain</keyword>
<keyword id="KW-1278">Translocase</keyword>
<keyword id="KW-0812">Transmembrane</keyword>
<keyword id="KW-1133">Transmembrane helix</keyword>
<keyword id="KW-0813">Transport</keyword>
<keyword id="KW-0830">Ubiquinone</keyword>
<proteinExistence type="inferred from homology"/>
<gene>
    <name type="primary">MT-ND4L</name>
    <name type="synonym">MTND4L</name>
    <name type="synonym">NADH4L</name>
    <name type="synonym">ND4L</name>
</gene>
<accession>Q69B66</accession>
<dbReference type="EC" id="7.1.1.2"/>
<dbReference type="EMBL" id="AY398633">
    <property type="protein sequence ID" value="AAR33073.1"/>
    <property type="molecule type" value="Genomic_DNA"/>
</dbReference>
<dbReference type="EMBL" id="AP006466">
    <property type="protein sequence ID" value="BAD91676.1"/>
    <property type="molecule type" value="Genomic_DNA"/>
</dbReference>
<dbReference type="RefSeq" id="YP_220714.1">
    <property type="nucleotide sequence ID" value="NC_006926.1"/>
</dbReference>
<dbReference type="SMR" id="Q69B66"/>
<dbReference type="GeneID" id="3337178"/>
<dbReference type="CTD" id="4539"/>
<dbReference type="GO" id="GO:0005743">
    <property type="term" value="C:mitochondrial inner membrane"/>
    <property type="evidence" value="ECO:0000250"/>
    <property type="project" value="UniProtKB"/>
</dbReference>
<dbReference type="GO" id="GO:0045271">
    <property type="term" value="C:respiratory chain complex I"/>
    <property type="evidence" value="ECO:0000250"/>
    <property type="project" value="UniProtKB"/>
</dbReference>
<dbReference type="GO" id="GO:0008137">
    <property type="term" value="F:NADH dehydrogenase (ubiquinone) activity"/>
    <property type="evidence" value="ECO:0000250"/>
    <property type="project" value="UniProtKB"/>
</dbReference>
<dbReference type="GO" id="GO:0042773">
    <property type="term" value="P:ATP synthesis coupled electron transport"/>
    <property type="evidence" value="ECO:0007669"/>
    <property type="project" value="InterPro"/>
</dbReference>
<dbReference type="FunFam" id="1.10.287.3510:FF:000002">
    <property type="entry name" value="NADH-ubiquinone oxidoreductase chain 4L"/>
    <property type="match status" value="1"/>
</dbReference>
<dbReference type="Gene3D" id="1.10.287.3510">
    <property type="match status" value="1"/>
</dbReference>
<dbReference type="InterPro" id="IPR001133">
    <property type="entry name" value="NADH_UbQ_OxRdtase_chain4L/K"/>
</dbReference>
<dbReference type="InterPro" id="IPR039428">
    <property type="entry name" value="NUOK/Mnh_C1-like"/>
</dbReference>
<dbReference type="PANTHER" id="PTHR11434:SF0">
    <property type="entry name" value="NADH-UBIQUINONE OXIDOREDUCTASE CHAIN 4L"/>
    <property type="match status" value="1"/>
</dbReference>
<dbReference type="PANTHER" id="PTHR11434">
    <property type="entry name" value="NADH-UBIQUINONE OXIDOREDUCTASE SUBUNIT ND4L"/>
    <property type="match status" value="1"/>
</dbReference>
<dbReference type="Pfam" id="PF00420">
    <property type="entry name" value="Oxidored_q2"/>
    <property type="match status" value="1"/>
</dbReference>
<geneLocation type="mitochondrion"/>
<sequence>MTLIHMNILMAFSMSLVGLLMYRSHLMSALLCLEGMMLSLFVLATLTILSSHFTLANMMPIILLVFAACEAAIGLALLVMVSNTYGTDYVQSLNLLQC</sequence>
<organism>
    <name type="scientific">Balaenoptera bonaerensis</name>
    <name type="common">Antarctic minke whale</name>
    <name type="synonym">Balaenoptera acutorostrata subsp. bonaerensis</name>
    <dbReference type="NCBI Taxonomy" id="33556"/>
    <lineage>
        <taxon>Eukaryota</taxon>
        <taxon>Metazoa</taxon>
        <taxon>Chordata</taxon>
        <taxon>Craniata</taxon>
        <taxon>Vertebrata</taxon>
        <taxon>Euteleostomi</taxon>
        <taxon>Mammalia</taxon>
        <taxon>Eutheria</taxon>
        <taxon>Laurasiatheria</taxon>
        <taxon>Artiodactyla</taxon>
        <taxon>Whippomorpha</taxon>
        <taxon>Cetacea</taxon>
        <taxon>Mysticeti</taxon>
        <taxon>Balaenopteridae</taxon>
        <taxon>Balaenoptera</taxon>
    </lineage>
</organism>
<name>NU4LM_BALBN</name>
<reference key="1">
    <citation type="journal article" date="2004" name="Mol. Phylogenet. Evol.">
        <title>Phylogeny of mysticete whales based on mitochondrial and nuclear data.</title>
        <authorList>
            <person name="Rychel A.L."/>
            <person name="Reeder T.W."/>
            <person name="Berta A."/>
        </authorList>
    </citation>
    <scope>NUCLEOTIDE SEQUENCE [GENOMIC DNA]</scope>
</reference>
<reference key="2">
    <citation type="journal article" date="2005" name="Syst. Biol.">
        <title>Mitochondrial phylogenetics and evolution of mysticete whales.</title>
        <authorList>
            <person name="Sasaki T."/>
            <person name="Nikaido M."/>
            <person name="Hamilton H."/>
            <person name="Goto M."/>
            <person name="Kato H."/>
            <person name="Kanda N."/>
            <person name="Pastene L.A."/>
            <person name="Cao Y."/>
            <person name="Fordyce R.E."/>
            <person name="Hasegawa M."/>
            <person name="Okada N."/>
        </authorList>
    </citation>
    <scope>NUCLEOTIDE SEQUENCE [GENOMIC DNA]</scope>
</reference>
<comment type="function">
    <text evidence="1">Core subunit of the mitochondrial membrane respiratory chain NADH dehydrogenase (Complex I) which catalyzes electron transfer from NADH through the respiratory chain, using ubiquinone as an electron acceptor. Part of the enzyme membrane arm which is embedded in the lipid bilayer and involved in proton translocation.</text>
</comment>
<comment type="catalytic activity">
    <reaction evidence="1">
        <text>a ubiquinone + NADH + 5 H(+)(in) = a ubiquinol + NAD(+) + 4 H(+)(out)</text>
        <dbReference type="Rhea" id="RHEA:29091"/>
        <dbReference type="Rhea" id="RHEA-COMP:9565"/>
        <dbReference type="Rhea" id="RHEA-COMP:9566"/>
        <dbReference type="ChEBI" id="CHEBI:15378"/>
        <dbReference type="ChEBI" id="CHEBI:16389"/>
        <dbReference type="ChEBI" id="CHEBI:17976"/>
        <dbReference type="ChEBI" id="CHEBI:57540"/>
        <dbReference type="ChEBI" id="CHEBI:57945"/>
        <dbReference type="EC" id="7.1.1.2"/>
    </reaction>
    <physiologicalReaction direction="left-to-right" evidence="1">
        <dbReference type="Rhea" id="RHEA:29092"/>
    </physiologicalReaction>
</comment>
<comment type="subunit">
    <text evidence="2">Core subunit of respiratory chain NADH dehydrogenase (Complex I) which is composed of 45 different subunits.</text>
</comment>
<comment type="subcellular location">
    <subcellularLocation>
        <location evidence="2">Mitochondrion inner membrane</location>
        <topology evidence="3">Multi-pass membrane protein</topology>
    </subcellularLocation>
</comment>
<comment type="similarity">
    <text evidence="4">Belongs to the complex I subunit 4L family.</text>
</comment>
<feature type="chain" id="PRO_0000274977" description="NADH-ubiquinone oxidoreductase chain 4L">
    <location>
        <begin position="1"/>
        <end position="98"/>
    </location>
</feature>
<feature type="transmembrane region" description="Helical" evidence="3">
    <location>
        <begin position="1"/>
        <end position="21"/>
    </location>
</feature>
<feature type="transmembrane region" description="Helical" evidence="3">
    <location>
        <begin position="29"/>
        <end position="49"/>
    </location>
</feature>
<feature type="transmembrane region" description="Helical" evidence="3">
    <location>
        <begin position="61"/>
        <end position="81"/>
    </location>
</feature>
<evidence type="ECO:0000250" key="1">
    <source>
        <dbReference type="UniProtKB" id="P03901"/>
    </source>
</evidence>
<evidence type="ECO:0000250" key="2">
    <source>
        <dbReference type="UniProtKB" id="P03902"/>
    </source>
</evidence>
<evidence type="ECO:0000255" key="3"/>
<evidence type="ECO:0000305" key="4"/>
<protein>
    <recommendedName>
        <fullName>NADH-ubiquinone oxidoreductase chain 4L</fullName>
        <ecNumber>7.1.1.2</ecNumber>
    </recommendedName>
    <alternativeName>
        <fullName>NADH dehydrogenase subunit 4L</fullName>
    </alternativeName>
</protein>